<gene>
    <name evidence="1" type="primary">MT-ATP6</name>
    <name type="synonym">ATP6</name>
    <name type="synonym">ATPASE6</name>
    <name type="synonym">MTATP6</name>
</gene>
<sequence length="226" mass="24776">MNENLFASFIAPTILGLPAAVLIILLPPLLIPTSKYLINNRLIATQQWLIQLTSKQMMTMHNAKGRTWSLMLMWLIIFIATTNLLGLLPHSFTPTTQLSMNLAMAIPLWAGAVTTGFRSKTKNALAHLLPQGTPTPLIPMLVIIETISLFIQPMALAVRLTANITAGHLLMHLIGSATLAMSTTNLPSTLIIFTVLILLTMLEIAVALIQAYVFTLLVSLYLHENT</sequence>
<keyword id="KW-0066">ATP synthesis</keyword>
<keyword id="KW-0138">CF(0)</keyword>
<keyword id="KW-0375">Hydrogen ion transport</keyword>
<keyword id="KW-0406">Ion transport</keyword>
<keyword id="KW-0472">Membrane</keyword>
<keyword id="KW-0496">Mitochondrion</keyword>
<keyword id="KW-0999">Mitochondrion inner membrane</keyword>
<keyword id="KW-1185">Reference proteome</keyword>
<keyword id="KW-0812">Transmembrane</keyword>
<keyword id="KW-1133">Transmembrane helix</keyword>
<keyword id="KW-0813">Transport</keyword>
<comment type="function">
    <text evidence="1">Subunit a, of the mitochondrial membrane ATP synthase complex (F(1)F(0) ATP synthase or Complex V) that produces ATP from ADP in the presence of a proton gradient across the membrane which is generated by electron transport complexes of the respiratory chain. ATP synthase complex consist of a soluble F(1) head domain - the catalytic core - and a membrane F(1) domain - the membrane proton channel. These two domains are linked by a central stalk rotating inside the F(1) region and a stationary peripheral stalk. During catalysis, ATP synthesis in the catalytic domain of F(1) is coupled via a rotary mechanism of the central stalk subunits to proton translocation. With the subunit c (ATP5MC1), forms the proton-conducting channel in the F(0) domain, that contains two crucial half-channels (inlet and outlet) that facilitate proton movement from the mitochondrial intermembrane space (IMS) into the matrix. Protons are taken up via the inlet half-channel and released through the outlet half-channel, following a Grotthuss mechanism.</text>
</comment>
<comment type="catalytic activity">
    <reaction evidence="1">
        <text>H(+)(in) = H(+)(out)</text>
        <dbReference type="Rhea" id="RHEA:34979"/>
        <dbReference type="ChEBI" id="CHEBI:15378"/>
    </reaction>
</comment>
<comment type="subunit">
    <text evidence="1">Component of the ATP synthase complex composed at least of ATP5F1A/subunit alpha, ATP5F1B/subunit beta, ATP5MC1/subunit c (homooctomer), MT-ATP6/subunit a, MT-ATP8/subunit 8, ATP5ME/subunit e, ATP5MF/subunit f, ATP5MG/subunit g, ATP5MK/subunit k, ATP5MJ/subunit j, ATP5F1C/subunit gamma, ATP5F1D/subunit delta, ATP5F1E/subunit epsilon, ATP5PF/subunit F6, ATP5PB/subunit b, ATP5PD/subunit d, ATP5PO/subunit OSCP. ATP synthase complex consists of a soluble F(1) head domain (subunits alpha(3) and beta(3)) - the catalytic core - and a membrane F(0) domain - the membrane proton channel (subunits c, a, 8, e, f, g, k and j). These two domains are linked by a central stalk (subunits gamma, delta, and epsilon) rotating inside the F1 region and a stationary peripheral stalk (subunits F6, b, d, and OSCP). Interacts with DNAJC30; interaction is direct.</text>
</comment>
<comment type="subcellular location">
    <subcellularLocation>
        <location>Mitochondrion inner membrane</location>
        <topology>Multi-pass membrane protein</topology>
    </subcellularLocation>
</comment>
<comment type="similarity">
    <text evidence="3">Belongs to the ATPase A chain family.</text>
</comment>
<protein>
    <recommendedName>
        <fullName evidence="1">ATP synthase F(0) complex subunit a</fullName>
    </recommendedName>
    <alternativeName>
        <fullName>F-ATPase protein 6</fullName>
    </alternativeName>
    <alternativeName>
        <fullName evidence="1">Proton-conducting channel, ATP synthase F(0) complex subunit a</fullName>
    </alternativeName>
</protein>
<geneLocation type="mitochondrion"/>
<reference key="1">
    <citation type="journal article" date="1995" name="Proc. Natl. Acad. Sci. U.S.A.">
        <title>Recent African origin of modern humans revealed by complete sequences of hominoid mitochondrial DNAs.</title>
        <authorList>
            <person name="Horai S."/>
            <person name="Hayasaka K."/>
            <person name="Kondo R."/>
            <person name="Tsugane K."/>
            <person name="Takahata N."/>
        </authorList>
    </citation>
    <scope>NUCLEOTIDE SEQUENCE [GENOMIC DNA]</scope>
</reference>
<proteinExistence type="inferred from homology"/>
<accession>Q9T9Y7</accession>
<evidence type="ECO:0000250" key="1">
    <source>
        <dbReference type="UniProtKB" id="P00846"/>
    </source>
</evidence>
<evidence type="ECO:0000255" key="2"/>
<evidence type="ECO:0000305" key="3"/>
<dbReference type="EMBL" id="D38114">
    <property type="protein sequence ID" value="BAA85280.1"/>
    <property type="molecule type" value="Genomic_DNA"/>
</dbReference>
<dbReference type="PIR" id="F59153">
    <property type="entry name" value="F59153"/>
</dbReference>
<dbReference type="RefSeq" id="NP_008217.1">
    <property type="nucleotide sequence ID" value="NC_001645.1"/>
</dbReference>
<dbReference type="SMR" id="Q9T9Y7"/>
<dbReference type="FunCoup" id="Q9T9Y7">
    <property type="interactions" value="404"/>
</dbReference>
<dbReference type="STRING" id="9593.ENSGGOP00000022639"/>
<dbReference type="GeneID" id="807887"/>
<dbReference type="CTD" id="4508"/>
<dbReference type="eggNOG" id="KOG4665">
    <property type="taxonomic scope" value="Eukaryota"/>
</dbReference>
<dbReference type="InParanoid" id="Q9T9Y7"/>
<dbReference type="Proteomes" id="UP000001519">
    <property type="component" value="Mitochondrion"/>
</dbReference>
<dbReference type="GO" id="GO:0005743">
    <property type="term" value="C:mitochondrial inner membrane"/>
    <property type="evidence" value="ECO:0007669"/>
    <property type="project" value="UniProtKB-SubCell"/>
</dbReference>
<dbReference type="GO" id="GO:0045259">
    <property type="term" value="C:proton-transporting ATP synthase complex"/>
    <property type="evidence" value="ECO:0000250"/>
    <property type="project" value="UniProtKB"/>
</dbReference>
<dbReference type="GO" id="GO:0015252">
    <property type="term" value="F:proton channel activity"/>
    <property type="evidence" value="ECO:0000250"/>
    <property type="project" value="UniProtKB"/>
</dbReference>
<dbReference type="GO" id="GO:0015986">
    <property type="term" value="P:proton motive force-driven ATP synthesis"/>
    <property type="evidence" value="ECO:0000250"/>
    <property type="project" value="UniProtKB"/>
</dbReference>
<dbReference type="GO" id="GO:1902600">
    <property type="term" value="P:proton transmembrane transport"/>
    <property type="evidence" value="ECO:0000250"/>
    <property type="project" value="UniProtKB"/>
</dbReference>
<dbReference type="CDD" id="cd00310">
    <property type="entry name" value="ATP-synt_Fo_a_6"/>
    <property type="match status" value="1"/>
</dbReference>
<dbReference type="FunFam" id="1.20.120.220:FF:000004">
    <property type="entry name" value="ATP synthase subunit a"/>
    <property type="match status" value="1"/>
</dbReference>
<dbReference type="Gene3D" id="1.20.120.220">
    <property type="entry name" value="ATP synthase, F0 complex, subunit A"/>
    <property type="match status" value="1"/>
</dbReference>
<dbReference type="InterPro" id="IPR000568">
    <property type="entry name" value="ATP_synth_F0_asu"/>
</dbReference>
<dbReference type="InterPro" id="IPR023011">
    <property type="entry name" value="ATP_synth_F0_asu_AS"/>
</dbReference>
<dbReference type="InterPro" id="IPR045083">
    <property type="entry name" value="ATP_synth_F0_asu_bact/mt"/>
</dbReference>
<dbReference type="InterPro" id="IPR035908">
    <property type="entry name" value="F0_ATP_A_sf"/>
</dbReference>
<dbReference type="NCBIfam" id="TIGR01131">
    <property type="entry name" value="ATP_synt_6_or_A"/>
    <property type="match status" value="1"/>
</dbReference>
<dbReference type="PANTHER" id="PTHR11410">
    <property type="entry name" value="ATP SYNTHASE SUBUNIT A"/>
    <property type="match status" value="1"/>
</dbReference>
<dbReference type="PANTHER" id="PTHR11410:SF0">
    <property type="entry name" value="ATP SYNTHASE SUBUNIT A"/>
    <property type="match status" value="1"/>
</dbReference>
<dbReference type="Pfam" id="PF00119">
    <property type="entry name" value="ATP-synt_A"/>
    <property type="match status" value="1"/>
</dbReference>
<dbReference type="PRINTS" id="PR00123">
    <property type="entry name" value="ATPASEA"/>
</dbReference>
<dbReference type="SUPFAM" id="SSF81336">
    <property type="entry name" value="F1F0 ATP synthase subunit A"/>
    <property type="match status" value="1"/>
</dbReference>
<dbReference type="PROSITE" id="PS00449">
    <property type="entry name" value="ATPASE_A"/>
    <property type="match status" value="1"/>
</dbReference>
<feature type="chain" id="PRO_0000082123" description="ATP synthase F(0) complex subunit a">
    <location>
        <begin position="1"/>
        <end position="226"/>
    </location>
</feature>
<feature type="transmembrane region" description="Helical" evidence="2">
    <location>
        <begin position="5"/>
        <end position="25"/>
    </location>
</feature>
<feature type="transmembrane region" description="Helical" evidence="2">
    <location>
        <begin position="68"/>
        <end position="88"/>
    </location>
</feature>
<feature type="transmembrane region" description="Helical" evidence="2">
    <location>
        <begin position="97"/>
        <end position="117"/>
    </location>
</feature>
<feature type="transmembrane region" description="Helical" evidence="2">
    <location>
        <begin position="138"/>
        <end position="158"/>
    </location>
</feature>
<feature type="transmembrane region" description="Helical" evidence="2">
    <location>
        <begin position="160"/>
        <end position="180"/>
    </location>
</feature>
<feature type="transmembrane region" description="Helical" evidence="2">
    <location>
        <begin position="189"/>
        <end position="209"/>
    </location>
</feature>
<name>ATP6_GORGO</name>
<organism>
    <name type="scientific">Gorilla gorilla gorilla</name>
    <name type="common">Western lowland gorilla</name>
    <dbReference type="NCBI Taxonomy" id="9595"/>
    <lineage>
        <taxon>Eukaryota</taxon>
        <taxon>Metazoa</taxon>
        <taxon>Chordata</taxon>
        <taxon>Craniata</taxon>
        <taxon>Vertebrata</taxon>
        <taxon>Euteleostomi</taxon>
        <taxon>Mammalia</taxon>
        <taxon>Eutheria</taxon>
        <taxon>Euarchontoglires</taxon>
        <taxon>Primates</taxon>
        <taxon>Haplorrhini</taxon>
        <taxon>Catarrhini</taxon>
        <taxon>Hominidae</taxon>
        <taxon>Gorilla</taxon>
    </lineage>
</organism>